<organism>
    <name type="scientific">Methylococcus capsulatus (strain ATCC 33009 / NCIMB 11132 / Bath)</name>
    <dbReference type="NCBI Taxonomy" id="243233"/>
    <lineage>
        <taxon>Bacteria</taxon>
        <taxon>Pseudomonadati</taxon>
        <taxon>Pseudomonadota</taxon>
        <taxon>Gammaproteobacteria</taxon>
        <taxon>Methylococcales</taxon>
        <taxon>Methylococcaceae</taxon>
        <taxon>Methylococcus</taxon>
    </lineage>
</organism>
<sequence>MYAVIQTGGKQYRVQPGDKVKVESLDAEAGQEVAFEKVLLIQSDDGVKIGQPFVSGGKVTGTVVAHGRHPKIRIIKFRRRKHHMKQAGHRQNYTEVQINEISA</sequence>
<proteinExistence type="inferred from homology"/>
<protein>
    <recommendedName>
        <fullName evidence="1">Large ribosomal subunit protein bL21</fullName>
    </recommendedName>
    <alternativeName>
        <fullName evidence="2">50S ribosomal protein L21</fullName>
    </alternativeName>
</protein>
<gene>
    <name evidence="1" type="primary">rplU</name>
    <name type="ordered locus">MCA2246</name>
</gene>
<dbReference type="EMBL" id="AE017282">
    <property type="protein sequence ID" value="AAU91767.1"/>
    <property type="molecule type" value="Genomic_DNA"/>
</dbReference>
<dbReference type="RefSeq" id="WP_010961476.1">
    <property type="nucleotide sequence ID" value="NC_002977.6"/>
</dbReference>
<dbReference type="SMR" id="Q605N4"/>
<dbReference type="STRING" id="243233.MCA2246"/>
<dbReference type="GeneID" id="88224452"/>
<dbReference type="KEGG" id="mca:MCA2246"/>
<dbReference type="eggNOG" id="COG0261">
    <property type="taxonomic scope" value="Bacteria"/>
</dbReference>
<dbReference type="HOGENOM" id="CLU_061463_3_1_6"/>
<dbReference type="Proteomes" id="UP000006821">
    <property type="component" value="Chromosome"/>
</dbReference>
<dbReference type="GO" id="GO:0005737">
    <property type="term" value="C:cytoplasm"/>
    <property type="evidence" value="ECO:0007669"/>
    <property type="project" value="UniProtKB-ARBA"/>
</dbReference>
<dbReference type="GO" id="GO:1990904">
    <property type="term" value="C:ribonucleoprotein complex"/>
    <property type="evidence" value="ECO:0007669"/>
    <property type="project" value="UniProtKB-KW"/>
</dbReference>
<dbReference type="GO" id="GO:0005840">
    <property type="term" value="C:ribosome"/>
    <property type="evidence" value="ECO:0007669"/>
    <property type="project" value="UniProtKB-KW"/>
</dbReference>
<dbReference type="GO" id="GO:0019843">
    <property type="term" value="F:rRNA binding"/>
    <property type="evidence" value="ECO:0007669"/>
    <property type="project" value="UniProtKB-UniRule"/>
</dbReference>
<dbReference type="GO" id="GO:0003735">
    <property type="term" value="F:structural constituent of ribosome"/>
    <property type="evidence" value="ECO:0007669"/>
    <property type="project" value="InterPro"/>
</dbReference>
<dbReference type="GO" id="GO:0006412">
    <property type="term" value="P:translation"/>
    <property type="evidence" value="ECO:0007669"/>
    <property type="project" value="UniProtKB-UniRule"/>
</dbReference>
<dbReference type="HAMAP" id="MF_01363">
    <property type="entry name" value="Ribosomal_bL21"/>
    <property type="match status" value="1"/>
</dbReference>
<dbReference type="InterPro" id="IPR028909">
    <property type="entry name" value="bL21-like"/>
</dbReference>
<dbReference type="InterPro" id="IPR036164">
    <property type="entry name" value="bL21-like_sf"/>
</dbReference>
<dbReference type="InterPro" id="IPR001787">
    <property type="entry name" value="Ribosomal_bL21"/>
</dbReference>
<dbReference type="InterPro" id="IPR018258">
    <property type="entry name" value="Ribosomal_bL21_CS"/>
</dbReference>
<dbReference type="NCBIfam" id="TIGR00061">
    <property type="entry name" value="L21"/>
    <property type="match status" value="1"/>
</dbReference>
<dbReference type="PANTHER" id="PTHR21349">
    <property type="entry name" value="50S RIBOSOMAL PROTEIN L21"/>
    <property type="match status" value="1"/>
</dbReference>
<dbReference type="PANTHER" id="PTHR21349:SF0">
    <property type="entry name" value="LARGE RIBOSOMAL SUBUNIT PROTEIN BL21M"/>
    <property type="match status" value="1"/>
</dbReference>
<dbReference type="Pfam" id="PF00829">
    <property type="entry name" value="Ribosomal_L21p"/>
    <property type="match status" value="1"/>
</dbReference>
<dbReference type="SUPFAM" id="SSF141091">
    <property type="entry name" value="L21p-like"/>
    <property type="match status" value="1"/>
</dbReference>
<dbReference type="PROSITE" id="PS01169">
    <property type="entry name" value="RIBOSOMAL_L21"/>
    <property type="match status" value="1"/>
</dbReference>
<feature type="chain" id="PRO_0000269343" description="Large ribosomal subunit protein bL21">
    <location>
        <begin position="1"/>
        <end position="103"/>
    </location>
</feature>
<accession>Q605N4</accession>
<evidence type="ECO:0000255" key="1">
    <source>
        <dbReference type="HAMAP-Rule" id="MF_01363"/>
    </source>
</evidence>
<evidence type="ECO:0000305" key="2"/>
<name>RL21_METCA</name>
<keyword id="KW-1185">Reference proteome</keyword>
<keyword id="KW-0687">Ribonucleoprotein</keyword>
<keyword id="KW-0689">Ribosomal protein</keyword>
<keyword id="KW-0694">RNA-binding</keyword>
<keyword id="KW-0699">rRNA-binding</keyword>
<reference key="1">
    <citation type="journal article" date="2004" name="PLoS Biol.">
        <title>Genomic insights into methanotrophy: the complete genome sequence of Methylococcus capsulatus (Bath).</title>
        <authorList>
            <person name="Ward N.L."/>
            <person name="Larsen O."/>
            <person name="Sakwa J."/>
            <person name="Bruseth L."/>
            <person name="Khouri H.M."/>
            <person name="Durkin A.S."/>
            <person name="Dimitrov G."/>
            <person name="Jiang L."/>
            <person name="Scanlan D."/>
            <person name="Kang K.H."/>
            <person name="Lewis M.R."/>
            <person name="Nelson K.E."/>
            <person name="Methe B.A."/>
            <person name="Wu M."/>
            <person name="Heidelberg J.F."/>
            <person name="Paulsen I.T."/>
            <person name="Fouts D.E."/>
            <person name="Ravel J."/>
            <person name="Tettelin H."/>
            <person name="Ren Q."/>
            <person name="Read T.D."/>
            <person name="DeBoy R.T."/>
            <person name="Seshadri R."/>
            <person name="Salzberg S.L."/>
            <person name="Jensen H.B."/>
            <person name="Birkeland N.K."/>
            <person name="Nelson W.C."/>
            <person name="Dodson R.J."/>
            <person name="Grindhaug S.H."/>
            <person name="Holt I.E."/>
            <person name="Eidhammer I."/>
            <person name="Jonasen I."/>
            <person name="Vanaken S."/>
            <person name="Utterback T.R."/>
            <person name="Feldblyum T.V."/>
            <person name="Fraser C.M."/>
            <person name="Lillehaug J.R."/>
            <person name="Eisen J.A."/>
        </authorList>
    </citation>
    <scope>NUCLEOTIDE SEQUENCE [LARGE SCALE GENOMIC DNA]</scope>
    <source>
        <strain>ATCC 33009 / NCIMB 11132 / Bath</strain>
    </source>
</reference>
<comment type="function">
    <text evidence="1">This protein binds to 23S rRNA in the presence of protein L20.</text>
</comment>
<comment type="subunit">
    <text evidence="1">Part of the 50S ribosomal subunit. Contacts protein L20.</text>
</comment>
<comment type="similarity">
    <text evidence="1">Belongs to the bacterial ribosomal protein bL21 family.</text>
</comment>